<comment type="function">
    <text evidence="1">NQR complex catalyzes the reduction of ubiquinone-1 to ubiquinol by two successive reactions, coupled with the transport of Na(+) ions from the cytoplasm to the periplasm. NqrA to NqrE are probably involved in the second step, the conversion of ubisemiquinone to ubiquinol.</text>
</comment>
<comment type="catalytic activity">
    <reaction evidence="1">
        <text>a ubiquinone + n Na(+)(in) + NADH + H(+) = a ubiquinol + n Na(+)(out) + NAD(+)</text>
        <dbReference type="Rhea" id="RHEA:47748"/>
        <dbReference type="Rhea" id="RHEA-COMP:9565"/>
        <dbReference type="Rhea" id="RHEA-COMP:9566"/>
        <dbReference type="ChEBI" id="CHEBI:15378"/>
        <dbReference type="ChEBI" id="CHEBI:16389"/>
        <dbReference type="ChEBI" id="CHEBI:17976"/>
        <dbReference type="ChEBI" id="CHEBI:29101"/>
        <dbReference type="ChEBI" id="CHEBI:57540"/>
        <dbReference type="ChEBI" id="CHEBI:57945"/>
        <dbReference type="EC" id="7.2.1.1"/>
    </reaction>
</comment>
<comment type="subunit">
    <text evidence="1">Composed of six subunits; NqrA, NqrB, NqrC, NqrD, NqrE and NqrF.</text>
</comment>
<comment type="similarity">
    <text evidence="1">Belongs to the NqrA family.</text>
</comment>
<protein>
    <recommendedName>
        <fullName evidence="1">Na(+)-translocating NADH-quinone reductase subunit A</fullName>
        <shortName evidence="1">Na(+)-NQR subunit A</shortName>
        <shortName evidence="1">Na(+)-translocating NQR subunit A</shortName>
        <ecNumber evidence="1">7.2.1.1</ecNumber>
    </recommendedName>
    <alternativeName>
        <fullName evidence="1">NQR complex subunit A</fullName>
    </alternativeName>
    <alternativeName>
        <fullName evidence="1">NQR-1 subunit A</fullName>
    </alternativeName>
</protein>
<accession>B8F5U5</accession>
<feature type="chain" id="PRO_1000134930" description="Na(+)-translocating NADH-quinone reductase subunit A">
    <location>
        <begin position="1"/>
        <end position="448"/>
    </location>
</feature>
<reference key="1">
    <citation type="journal article" date="2009" name="J. Bacteriol.">
        <title>Complete genome sequence of Haemophilus parasuis SH0165.</title>
        <authorList>
            <person name="Yue M."/>
            <person name="Yang F."/>
            <person name="Yang J."/>
            <person name="Bei W."/>
            <person name="Cai X."/>
            <person name="Chen L."/>
            <person name="Dong J."/>
            <person name="Zhou R."/>
            <person name="Jin M."/>
            <person name="Jin Q."/>
            <person name="Chen H."/>
        </authorList>
    </citation>
    <scope>NUCLEOTIDE SEQUENCE [LARGE SCALE GENOMIC DNA]</scope>
    <source>
        <strain>SH0165</strain>
    </source>
</reference>
<gene>
    <name evidence="1" type="primary">nqrA</name>
    <name type="ordered locus">HAPS_1079</name>
</gene>
<organism>
    <name type="scientific">Glaesserella parasuis serovar 5 (strain SH0165)</name>
    <name type="common">Haemophilus parasuis</name>
    <dbReference type="NCBI Taxonomy" id="557723"/>
    <lineage>
        <taxon>Bacteria</taxon>
        <taxon>Pseudomonadati</taxon>
        <taxon>Pseudomonadota</taxon>
        <taxon>Gammaproteobacteria</taxon>
        <taxon>Pasteurellales</taxon>
        <taxon>Pasteurellaceae</taxon>
        <taxon>Glaesserella</taxon>
    </lineage>
</organism>
<dbReference type="EC" id="7.2.1.1" evidence="1"/>
<dbReference type="EMBL" id="CP001321">
    <property type="protein sequence ID" value="ACL32697.1"/>
    <property type="molecule type" value="Genomic_DNA"/>
</dbReference>
<dbReference type="RefSeq" id="WP_015939612.1">
    <property type="nucleotide sequence ID" value="NC_011852.1"/>
</dbReference>
<dbReference type="SMR" id="B8F5U5"/>
<dbReference type="STRING" id="557723.HAPS_1079"/>
<dbReference type="GeneID" id="66618040"/>
<dbReference type="KEGG" id="hap:HAPS_1079"/>
<dbReference type="PATRIC" id="fig|557723.8.peg.1075"/>
<dbReference type="HOGENOM" id="CLU_046656_0_0_6"/>
<dbReference type="Proteomes" id="UP000006743">
    <property type="component" value="Chromosome"/>
</dbReference>
<dbReference type="GO" id="GO:0016655">
    <property type="term" value="F:oxidoreductase activity, acting on NAD(P)H, quinone or similar compound as acceptor"/>
    <property type="evidence" value="ECO:0007669"/>
    <property type="project" value="UniProtKB-UniRule"/>
</dbReference>
<dbReference type="GO" id="GO:0006814">
    <property type="term" value="P:sodium ion transport"/>
    <property type="evidence" value="ECO:0007669"/>
    <property type="project" value="UniProtKB-UniRule"/>
</dbReference>
<dbReference type="Gene3D" id="2.40.50.100">
    <property type="match status" value="1"/>
</dbReference>
<dbReference type="HAMAP" id="MF_00425">
    <property type="entry name" value="NqrA"/>
    <property type="match status" value="1"/>
</dbReference>
<dbReference type="InterPro" id="IPR008703">
    <property type="entry name" value="NqrA"/>
</dbReference>
<dbReference type="InterPro" id="IPR056148">
    <property type="entry name" value="NQRA_2nd"/>
</dbReference>
<dbReference type="InterPro" id="IPR022615">
    <property type="entry name" value="NqrA_C_domain"/>
</dbReference>
<dbReference type="InterPro" id="IPR056147">
    <property type="entry name" value="NQRA_N"/>
</dbReference>
<dbReference type="NCBIfam" id="TIGR01936">
    <property type="entry name" value="nqrA"/>
    <property type="match status" value="1"/>
</dbReference>
<dbReference type="NCBIfam" id="NF003759">
    <property type="entry name" value="PRK05352.1-2"/>
    <property type="match status" value="1"/>
</dbReference>
<dbReference type="PANTHER" id="PTHR37839">
    <property type="entry name" value="NA(+)-TRANSLOCATING NADH-QUINONE REDUCTASE SUBUNIT A"/>
    <property type="match status" value="1"/>
</dbReference>
<dbReference type="PANTHER" id="PTHR37839:SF1">
    <property type="entry name" value="NA(+)-TRANSLOCATING NADH-QUINONE REDUCTASE SUBUNIT A"/>
    <property type="match status" value="1"/>
</dbReference>
<dbReference type="Pfam" id="PF24836">
    <property type="entry name" value="NQRA_2nd"/>
    <property type="match status" value="1"/>
</dbReference>
<dbReference type="Pfam" id="PF05896">
    <property type="entry name" value="NQRA_N"/>
    <property type="match status" value="1"/>
</dbReference>
<dbReference type="Pfam" id="PF11973">
    <property type="entry name" value="NQRA_SLBB"/>
    <property type="match status" value="1"/>
</dbReference>
<evidence type="ECO:0000255" key="1">
    <source>
        <dbReference type="HAMAP-Rule" id="MF_00425"/>
    </source>
</evidence>
<sequence length="448" mass="48493">MITIKQGLDLPIAGKPEQVIHNGNTVNEVAVLGEEYVGMRPSMKVREGDVVKKGQVLFEDKKNAGVVFTAPASGTIVAINRGEKRVLQSVVIKVEGDEQVTFERYNASELSSLTADQVKQNLVNSGLWTAFRTRPFSKVPALDAVPSSIFVNAMDTNPLATDPEVVLNEHKQDFVDGLTVLSRLFDGQKIIHLCRAPDSNIPTAEVANVKVTSFAGPHPAGLSGTHIHFIDPVSVTKSVWYLNYQDVIAIGKLFTTGELYTDRVVSLAGPQVKKPRLVRTQLGANLSQLTAGELAEGENRVISGSVLSGAKAVGVHDYLGRYALQVSVIAEGREQEFLGMIAPYSHKFSITRTVLGAFSKKLFNFTTAVNGSERAMVPIGSYERVMPLDILPTLLLRDLASGDTDSAQALGCLELDEEDLALCTFVCPGKNNYAPMLRAALDKIEKEG</sequence>
<keyword id="KW-0406">Ion transport</keyword>
<keyword id="KW-0520">NAD</keyword>
<keyword id="KW-1185">Reference proteome</keyword>
<keyword id="KW-0915">Sodium</keyword>
<keyword id="KW-0739">Sodium transport</keyword>
<keyword id="KW-1278">Translocase</keyword>
<keyword id="KW-0813">Transport</keyword>
<keyword id="KW-0830">Ubiquinone</keyword>
<name>NQRA_GLAP5</name>
<proteinExistence type="inferred from homology"/>